<evidence type="ECO:0000255" key="1">
    <source>
        <dbReference type="HAMAP-Rule" id="MF_00793"/>
    </source>
</evidence>
<proteinExistence type="inferred from homology"/>
<gene>
    <name evidence="1" type="primary">pebB</name>
    <name type="ordered locus">PMT9312_1684</name>
</gene>
<keyword id="KW-0560">Oxidoreductase</keyword>
<feature type="chain" id="PRO_1000148510" description="Phycoerythrobilin:ferredoxin oxidoreductase">
    <location>
        <begin position="1"/>
        <end position="253"/>
    </location>
</feature>
<protein>
    <recommendedName>
        <fullName evidence="1">Phycoerythrobilin:ferredoxin oxidoreductase</fullName>
        <ecNumber evidence="1">1.3.7.3</ecNumber>
    </recommendedName>
</protein>
<sequence>MLIEDTIFYRPDWKWHNFLKYLVNNLSKYNCLEKKIPSEYSYKDSTYGSKKSKKNVNLSTWGVTHKKRIQFARAVCINSPNYSVLNFLIIPNTIYNVPFFGVDFVSLPNSHLLVLDFQPSLKIQNQYNNELLEKLIKLKNHCHSSLPLAEKMSADVARFFSPGVIWSKLPKEERSDFLIANQLYTSFKEYLDLYLEILFESQQVNLNLQKELINGQNNYLKYRIDNDPARPMLSSLFGKEFTESLIKEVLFTT</sequence>
<accession>Q318F0</accession>
<organism>
    <name type="scientific">Prochlorococcus marinus (strain MIT 9312)</name>
    <dbReference type="NCBI Taxonomy" id="74546"/>
    <lineage>
        <taxon>Bacteria</taxon>
        <taxon>Bacillati</taxon>
        <taxon>Cyanobacteriota</taxon>
        <taxon>Cyanophyceae</taxon>
        <taxon>Synechococcales</taxon>
        <taxon>Prochlorococcaceae</taxon>
        <taxon>Prochlorococcus</taxon>
    </lineage>
</organism>
<comment type="function">
    <text evidence="1">Catalyzes the two-electron reduction of the C2 and C3(1) diene system of 15,16-dihydrobiliverdin.</text>
</comment>
<comment type="catalytic activity">
    <reaction evidence="1">
        <text>(3Z)-phycoerythrobilin + oxidized 2[4Fe-4S]-[ferredoxin] = 15,16-dihydrobiliverdin + reduced 2[4Fe-4S]-[ferredoxin] + 2 H(+)</text>
        <dbReference type="Rhea" id="RHEA:22092"/>
        <dbReference type="Rhea" id="RHEA-COMP:10002"/>
        <dbReference type="Rhea" id="RHEA-COMP:10004"/>
        <dbReference type="ChEBI" id="CHEBI:15378"/>
        <dbReference type="ChEBI" id="CHEBI:33722"/>
        <dbReference type="ChEBI" id="CHEBI:33723"/>
        <dbReference type="ChEBI" id="CHEBI:57438"/>
        <dbReference type="ChEBI" id="CHEBI:57899"/>
        <dbReference type="EC" id="1.3.7.3"/>
    </reaction>
</comment>
<comment type="similarity">
    <text evidence="1">Belongs to the HY2 family.</text>
</comment>
<dbReference type="EC" id="1.3.7.3" evidence="1"/>
<dbReference type="EMBL" id="CP000111">
    <property type="protein sequence ID" value="ABB50745.1"/>
    <property type="molecule type" value="Genomic_DNA"/>
</dbReference>
<dbReference type="RefSeq" id="WP_011377226.1">
    <property type="nucleotide sequence ID" value="NC_007577.1"/>
</dbReference>
<dbReference type="SMR" id="Q318F0"/>
<dbReference type="STRING" id="74546.PMT9312_1684"/>
<dbReference type="KEGG" id="pmi:PMT9312_1684"/>
<dbReference type="eggNOG" id="ENOG502Z8GK">
    <property type="taxonomic scope" value="Bacteria"/>
</dbReference>
<dbReference type="HOGENOM" id="CLU_086208_1_0_3"/>
<dbReference type="OrthoDB" id="421401at2"/>
<dbReference type="Proteomes" id="UP000002715">
    <property type="component" value="Chromosome"/>
</dbReference>
<dbReference type="GO" id="GO:0050897">
    <property type="term" value="F:cobalt ion binding"/>
    <property type="evidence" value="ECO:0007669"/>
    <property type="project" value="InterPro"/>
</dbReference>
<dbReference type="GO" id="GO:0050618">
    <property type="term" value="F:phycoerythrobilin:ferredoxin oxidoreductase activity"/>
    <property type="evidence" value="ECO:0007669"/>
    <property type="project" value="UniProtKB-UniRule"/>
</dbReference>
<dbReference type="GO" id="GO:0010024">
    <property type="term" value="P:phytochromobilin biosynthetic process"/>
    <property type="evidence" value="ECO:0007669"/>
    <property type="project" value="InterPro"/>
</dbReference>
<dbReference type="Gene3D" id="3.40.1500.20">
    <property type="match status" value="1"/>
</dbReference>
<dbReference type="HAMAP" id="MF_00793">
    <property type="entry name" value="PebB"/>
    <property type="match status" value="1"/>
</dbReference>
<dbReference type="InterPro" id="IPR009249">
    <property type="entry name" value="Ferredoxin-dep_bilin_Rdtase"/>
</dbReference>
<dbReference type="InterPro" id="IPR022827">
    <property type="entry name" value="Phycoerythrobilin_Fdx_Rdtase"/>
</dbReference>
<dbReference type="NCBIfam" id="NF009721">
    <property type="entry name" value="PRK13248.1"/>
    <property type="match status" value="1"/>
</dbReference>
<dbReference type="PANTHER" id="PTHR34557">
    <property type="entry name" value="PHYTOCHROMOBILIN:FERREDOXIN OXIDOREDUCTASE, CHLOROPLASTIC"/>
    <property type="match status" value="1"/>
</dbReference>
<dbReference type="PANTHER" id="PTHR34557:SF1">
    <property type="entry name" value="PHYTOCHROMOBILIN:FERREDOXIN OXIDOREDUCTASE, CHLOROPLASTIC"/>
    <property type="match status" value="1"/>
</dbReference>
<dbReference type="Pfam" id="PF05996">
    <property type="entry name" value="Fe_bilin_red"/>
    <property type="match status" value="1"/>
</dbReference>
<name>PEBB_PROM9</name>
<reference key="1">
    <citation type="journal article" date="2006" name="Science">
        <title>Genomic islands and the ecology and evolution of Prochlorococcus.</title>
        <authorList>
            <person name="Coleman M.L."/>
            <person name="Sullivan M.B."/>
            <person name="Martiny A.C."/>
            <person name="Steglich C."/>
            <person name="Barry K."/>
            <person name="Delong E.F."/>
            <person name="Chisholm S.W."/>
        </authorList>
    </citation>
    <scope>NUCLEOTIDE SEQUENCE [LARGE SCALE GENOMIC DNA]</scope>
    <source>
        <strain>MIT 9312</strain>
    </source>
</reference>